<proteinExistence type="inferred from homology"/>
<organism>
    <name type="scientific">Deinococcus radiodurans (strain ATCC 13939 / DSM 20539 / JCM 16871 / CCUG 27074 / LMG 4051 / NBRC 15346 / NCIMB 9279 / VKM B-1422 / R1)</name>
    <dbReference type="NCBI Taxonomy" id="243230"/>
    <lineage>
        <taxon>Bacteria</taxon>
        <taxon>Thermotogati</taxon>
        <taxon>Deinococcota</taxon>
        <taxon>Deinococci</taxon>
        <taxon>Deinococcales</taxon>
        <taxon>Deinococcaceae</taxon>
        <taxon>Deinococcus</taxon>
    </lineage>
</organism>
<name>LYSZ_DEIRA</name>
<comment type="function">
    <text evidence="1">Catalyzes the phosphorylation of LysW-gamma-alpha-aminoadipate.</text>
</comment>
<comment type="catalytic activity">
    <reaction evidence="1">
        <text>[amino-group carrier protein]-C-terminal-N-(1,4-dicarboxybutan-1-yl)-L-glutamine + ATP = [amino-group carrier protein]-C-terminal-N-(1-carboxy-5-phosphooxy-5-oxopentan-1-yl)-L-glutamine + ADP</text>
        <dbReference type="Rhea" id="RHEA:41944"/>
        <dbReference type="Rhea" id="RHEA-COMP:9694"/>
        <dbReference type="Rhea" id="RHEA-COMP:9712"/>
        <dbReference type="ChEBI" id="CHEBI:30616"/>
        <dbReference type="ChEBI" id="CHEBI:78499"/>
        <dbReference type="ChEBI" id="CHEBI:78503"/>
        <dbReference type="ChEBI" id="CHEBI:456216"/>
        <dbReference type="EC" id="2.7.2.17"/>
    </reaction>
</comment>
<comment type="pathway">
    <text evidence="1">Amino-acid biosynthesis; L-lysine biosynthesis via AAA pathway; L-lysine from L-alpha-aminoadipate (Thermus route): step 2/5.</text>
</comment>
<comment type="subcellular location">
    <subcellularLocation>
        <location evidence="1">Cytoplasm</location>
    </subcellularLocation>
</comment>
<comment type="similarity">
    <text evidence="1">Belongs to the acetylglutamate kinase family. LysZ subfamily.</text>
</comment>
<sequence>MLSRDQHCFTFAKRFSFLVCIRIVNMIVVKVGGSDGIDYDAVCADLAERWQAGEKLILVHGGSGETNRVAEALGHPPKFVTSPSGYTSRFTDRQTLEIFEMVYCGKMNKGLVERLQRLGVNAVGLSGLDGRIFEGKHKDSVRSVENGKVKVLRGDHTGTVEKVNTGLIELLLGAGYLPVLTPPAASYEGVAINVDGDRAAAQLAAALRAEALLLLSNVPGLLRDYPDEASLIREIPANDVESYLEFAQDRMKKKVLGAAEAVAGGVGRVVFGDARAGKPISAALAGEGTVVS</sequence>
<accession>Q9RUG6</accession>
<evidence type="ECO:0000255" key="1">
    <source>
        <dbReference type="HAMAP-Rule" id="MF_02082"/>
    </source>
</evidence>
<dbReference type="EC" id="2.7.2.17" evidence="1"/>
<dbReference type="EMBL" id="AE000513">
    <property type="protein sequence ID" value="AAF10984.1"/>
    <property type="molecule type" value="Genomic_DNA"/>
</dbReference>
<dbReference type="PIR" id="G75399">
    <property type="entry name" value="G75399"/>
</dbReference>
<dbReference type="RefSeq" id="NP_295143.2">
    <property type="nucleotide sequence ID" value="NC_001263.1"/>
</dbReference>
<dbReference type="SMR" id="Q9RUG6"/>
<dbReference type="STRING" id="243230.DR_1420"/>
<dbReference type="PaxDb" id="243230-DR_1420"/>
<dbReference type="EnsemblBacteria" id="AAF10984">
    <property type="protein sequence ID" value="AAF10984"/>
    <property type="gene ID" value="DR_1420"/>
</dbReference>
<dbReference type="KEGG" id="dra:DR_1420"/>
<dbReference type="PATRIC" id="fig|243230.17.peg.1616"/>
<dbReference type="eggNOG" id="COG0548">
    <property type="taxonomic scope" value="Bacteria"/>
</dbReference>
<dbReference type="HOGENOM" id="CLU_053680_2_1_0"/>
<dbReference type="InParanoid" id="Q9RUG6"/>
<dbReference type="OrthoDB" id="9803155at2"/>
<dbReference type="UniPathway" id="UPA00033">
    <property type="reaction ID" value="UER00036"/>
</dbReference>
<dbReference type="Proteomes" id="UP000002524">
    <property type="component" value="Chromosome 1"/>
</dbReference>
<dbReference type="GO" id="GO:0005737">
    <property type="term" value="C:cytoplasm"/>
    <property type="evidence" value="ECO:0007669"/>
    <property type="project" value="UniProtKB-SubCell"/>
</dbReference>
<dbReference type="GO" id="GO:0003991">
    <property type="term" value="F:acetylglutamate kinase activity"/>
    <property type="evidence" value="ECO:0000318"/>
    <property type="project" value="GO_Central"/>
</dbReference>
<dbReference type="GO" id="GO:0005524">
    <property type="term" value="F:ATP binding"/>
    <property type="evidence" value="ECO:0007669"/>
    <property type="project" value="UniProtKB-KW"/>
</dbReference>
<dbReference type="GO" id="GO:0043744">
    <property type="term" value="F:N2-acetyl-L-aminoadipate kinase activity"/>
    <property type="evidence" value="ECO:0007669"/>
    <property type="project" value="RHEA"/>
</dbReference>
<dbReference type="GO" id="GO:0006526">
    <property type="term" value="P:L-arginine biosynthetic process"/>
    <property type="evidence" value="ECO:0000318"/>
    <property type="project" value="GO_Central"/>
</dbReference>
<dbReference type="GO" id="GO:0019878">
    <property type="term" value="P:lysine biosynthetic process via aminoadipic acid"/>
    <property type="evidence" value="ECO:0007669"/>
    <property type="project" value="UniProtKB-UniRule"/>
</dbReference>
<dbReference type="CDD" id="cd04251">
    <property type="entry name" value="AAK_NAGK-UC"/>
    <property type="match status" value="1"/>
</dbReference>
<dbReference type="Gene3D" id="3.40.1160.10">
    <property type="entry name" value="Acetylglutamate kinase-like"/>
    <property type="match status" value="1"/>
</dbReference>
<dbReference type="HAMAP" id="MF_02082">
    <property type="entry name" value="LysZ"/>
    <property type="match status" value="1"/>
</dbReference>
<dbReference type="InterPro" id="IPR036393">
    <property type="entry name" value="AceGlu_kinase-like_sf"/>
</dbReference>
<dbReference type="InterPro" id="IPR004662">
    <property type="entry name" value="AcgluKinase_fam"/>
</dbReference>
<dbReference type="InterPro" id="IPR001048">
    <property type="entry name" value="Asp/Glu/Uridylate_kinase"/>
</dbReference>
<dbReference type="InterPro" id="IPR001057">
    <property type="entry name" value="Glu/AcGlu_kinase"/>
</dbReference>
<dbReference type="InterPro" id="IPR037529">
    <property type="entry name" value="LysZ"/>
</dbReference>
<dbReference type="NCBIfam" id="TIGR00761">
    <property type="entry name" value="argB"/>
    <property type="match status" value="1"/>
</dbReference>
<dbReference type="NCBIfam" id="NF010659">
    <property type="entry name" value="PRK14058.1-1"/>
    <property type="match status" value="1"/>
</dbReference>
<dbReference type="NCBIfam" id="NF010661">
    <property type="entry name" value="PRK14058.1-3"/>
    <property type="match status" value="1"/>
</dbReference>
<dbReference type="PANTHER" id="PTHR23342:SF20">
    <property type="entry name" value="[LYSW]-AMINOADIPATE KINASE"/>
    <property type="match status" value="1"/>
</dbReference>
<dbReference type="PANTHER" id="PTHR23342">
    <property type="entry name" value="N-ACETYLGLUTAMATE SYNTHASE"/>
    <property type="match status" value="1"/>
</dbReference>
<dbReference type="Pfam" id="PF00696">
    <property type="entry name" value="AA_kinase"/>
    <property type="match status" value="1"/>
</dbReference>
<dbReference type="PIRSF" id="PIRSF000728">
    <property type="entry name" value="NAGK"/>
    <property type="match status" value="1"/>
</dbReference>
<dbReference type="PRINTS" id="PR00474">
    <property type="entry name" value="GLU5KINASE"/>
</dbReference>
<dbReference type="SUPFAM" id="SSF53633">
    <property type="entry name" value="Carbamate kinase-like"/>
    <property type="match status" value="1"/>
</dbReference>
<feature type="chain" id="PRO_0000112711" description="[LysW]-aminoadipate kinase">
    <location>
        <begin position="1"/>
        <end position="292"/>
    </location>
</feature>
<feature type="binding site" evidence="1">
    <location>
        <position position="89"/>
    </location>
    <ligand>
        <name>substrate</name>
    </ligand>
</feature>
<feature type="binding site" evidence="1">
    <location>
        <position position="193"/>
    </location>
    <ligand>
        <name>substrate</name>
    </ligand>
</feature>
<feature type="site" description="Transition state stabilizer" evidence="1">
    <location>
        <position position="30"/>
    </location>
</feature>
<feature type="site" description="Transition state stabilizer" evidence="1">
    <location>
        <position position="254"/>
    </location>
</feature>
<keyword id="KW-0028">Amino-acid biosynthesis</keyword>
<keyword id="KW-0067">ATP-binding</keyword>
<keyword id="KW-0963">Cytoplasm</keyword>
<keyword id="KW-0418">Kinase</keyword>
<keyword id="KW-0457">Lysine biosynthesis</keyword>
<keyword id="KW-0547">Nucleotide-binding</keyword>
<keyword id="KW-1185">Reference proteome</keyword>
<keyword id="KW-0808">Transferase</keyword>
<gene>
    <name evidence="1" type="primary">lysZ</name>
    <name type="ordered locus">DR_1420</name>
</gene>
<reference key="1">
    <citation type="journal article" date="1999" name="Science">
        <title>Genome sequence of the radioresistant bacterium Deinococcus radiodurans R1.</title>
        <authorList>
            <person name="White O."/>
            <person name="Eisen J.A."/>
            <person name="Heidelberg J.F."/>
            <person name="Hickey E.K."/>
            <person name="Peterson J.D."/>
            <person name="Dodson R.J."/>
            <person name="Haft D.H."/>
            <person name="Gwinn M.L."/>
            <person name="Nelson W.C."/>
            <person name="Richardson D.L."/>
            <person name="Moffat K.S."/>
            <person name="Qin H."/>
            <person name="Jiang L."/>
            <person name="Pamphile W."/>
            <person name="Crosby M."/>
            <person name="Shen M."/>
            <person name="Vamathevan J.J."/>
            <person name="Lam P."/>
            <person name="McDonald L.A."/>
            <person name="Utterback T.R."/>
            <person name="Zalewski C."/>
            <person name="Makarova K.S."/>
            <person name="Aravind L."/>
            <person name="Daly M.J."/>
            <person name="Minton K.W."/>
            <person name="Fleischmann R.D."/>
            <person name="Ketchum K.A."/>
            <person name="Nelson K.E."/>
            <person name="Salzberg S.L."/>
            <person name="Smith H.O."/>
            <person name="Venter J.C."/>
            <person name="Fraser C.M."/>
        </authorList>
    </citation>
    <scope>NUCLEOTIDE SEQUENCE [LARGE SCALE GENOMIC DNA]</scope>
    <source>
        <strain>ATCC 13939 / DSM 20539 / JCM 16871 / CCUG 27074 / LMG 4051 / NBRC 15346 / NCIMB 9279 / VKM B-1422 / R1</strain>
    </source>
</reference>
<protein>
    <recommendedName>
        <fullName evidence="1">[LysW]-aminoadipate kinase</fullName>
        <ecNumber evidence="1">2.7.2.17</ecNumber>
    </recommendedName>
</protein>